<gene>
    <name type="primary">VP5</name>
</gene>
<proteinExistence type="predicted"/>
<feature type="chain" id="PRO_0000227881" description="Protein VP5">
    <location>
        <begin position="1"/>
        <end position="139"/>
    </location>
</feature>
<feature type="region of interest" description="Disordered" evidence="1">
    <location>
        <begin position="94"/>
        <end position="139"/>
    </location>
</feature>
<feature type="compositionally biased region" description="Polar residues" evidence="1">
    <location>
        <begin position="102"/>
        <end position="112"/>
    </location>
</feature>
<sequence length="139" mass="15340">MPDLSAALCRCGAQRSPRVSTHSTGPSMGLPTLEVSARSRTWTTIHFSLQRPTSMTRSAMYLLETVSQCSHFLLEATCLMLDLAMKFQALLESRDALPPTDLGTTMPTTNRSRSARPTPRPMGSTSTQQHPQRSRSTCR</sequence>
<accession>Q8AZL9</accession>
<reference key="1">
    <citation type="journal article" date="2003" name="J. Virol.">
        <title>Blotched snakehead virus is a new aquatic birnavirus that is slightly more related to avibirnavirus than to aquabirnavirus.</title>
        <authorList>
            <person name="Da Costa B."/>
            <person name="Soignier S."/>
            <person name="Chevalier C."/>
            <person name="Henry C."/>
            <person name="Thory C."/>
            <person name="Huet J.-C."/>
            <person name="Delmas B."/>
        </authorList>
    </citation>
    <scope>NUCLEOTIDE SEQUENCE [GENOMIC RNA]</scope>
</reference>
<organismHost>
    <name type="scientific">Channa lucius</name>
    <name type="common">Forest snakehead</name>
    <name type="synonym">Ophicephalus lucius</name>
    <dbReference type="NCBI Taxonomy" id="64146"/>
</organismHost>
<protein>
    <recommendedName>
        <fullName>Protein VP5</fullName>
    </recommendedName>
</protein>
<dbReference type="EMBL" id="AJ459382">
    <property type="protein sequence ID" value="CAD30690.1"/>
    <property type="molecule type" value="Genomic_RNA"/>
</dbReference>
<dbReference type="RefSeq" id="YP_052863.1">
    <property type="nucleotide sequence ID" value="NC_005982.1"/>
</dbReference>
<dbReference type="KEGG" id="vg:2943236"/>
<dbReference type="Proteomes" id="UP000007250">
    <property type="component" value="Genome"/>
</dbReference>
<name>VP5_BSNV</name>
<organism>
    <name type="scientific">Blotched snakehead virus</name>
    <name type="common">BSNV</name>
    <name type="synonym">Channa lucius virus</name>
    <dbReference type="NCBI Taxonomy" id="311176"/>
    <lineage>
        <taxon>Viruses</taxon>
        <taxon>Riboviria</taxon>
        <taxon>Orthornavirae</taxon>
        <taxon>Birnaviridae</taxon>
        <taxon>Blosnavirus</taxon>
        <taxon>Blosnavirus channae</taxon>
    </lineage>
</organism>
<evidence type="ECO:0000256" key="1">
    <source>
        <dbReference type="SAM" id="MobiDB-lite"/>
    </source>
</evidence>
<keyword id="KW-1185">Reference proteome</keyword>